<dbReference type="EMBL" id="CP000890">
    <property type="protein sequence ID" value="ABX77380.1"/>
    <property type="molecule type" value="Genomic_DNA"/>
</dbReference>
<dbReference type="RefSeq" id="WP_010958267.1">
    <property type="nucleotide sequence ID" value="NC_010117.1"/>
</dbReference>
<dbReference type="SMR" id="A9N941"/>
<dbReference type="KEGG" id="cbs:COXBURSA331_A1685"/>
<dbReference type="HOGENOM" id="CLU_038009_1_2_6"/>
<dbReference type="GO" id="GO:0005829">
    <property type="term" value="C:cytosol"/>
    <property type="evidence" value="ECO:0007669"/>
    <property type="project" value="TreeGrafter"/>
</dbReference>
<dbReference type="GO" id="GO:0005886">
    <property type="term" value="C:plasma membrane"/>
    <property type="evidence" value="ECO:0007669"/>
    <property type="project" value="UniProtKB-SubCell"/>
</dbReference>
<dbReference type="GO" id="GO:0005525">
    <property type="term" value="F:GTP binding"/>
    <property type="evidence" value="ECO:0007669"/>
    <property type="project" value="UniProtKB-UniRule"/>
</dbReference>
<dbReference type="GO" id="GO:0003924">
    <property type="term" value="F:GTPase activity"/>
    <property type="evidence" value="ECO:0007669"/>
    <property type="project" value="UniProtKB-UniRule"/>
</dbReference>
<dbReference type="GO" id="GO:0043024">
    <property type="term" value="F:ribosomal small subunit binding"/>
    <property type="evidence" value="ECO:0007669"/>
    <property type="project" value="TreeGrafter"/>
</dbReference>
<dbReference type="GO" id="GO:0070181">
    <property type="term" value="F:small ribosomal subunit rRNA binding"/>
    <property type="evidence" value="ECO:0007669"/>
    <property type="project" value="UniProtKB-UniRule"/>
</dbReference>
<dbReference type="GO" id="GO:0000028">
    <property type="term" value="P:ribosomal small subunit assembly"/>
    <property type="evidence" value="ECO:0007669"/>
    <property type="project" value="TreeGrafter"/>
</dbReference>
<dbReference type="CDD" id="cd04163">
    <property type="entry name" value="Era"/>
    <property type="match status" value="1"/>
</dbReference>
<dbReference type="CDD" id="cd22534">
    <property type="entry name" value="KH-II_Era"/>
    <property type="match status" value="1"/>
</dbReference>
<dbReference type="FunFam" id="3.30.300.20:FF:000003">
    <property type="entry name" value="GTPase Era"/>
    <property type="match status" value="1"/>
</dbReference>
<dbReference type="FunFam" id="3.40.50.300:FF:000094">
    <property type="entry name" value="GTPase Era"/>
    <property type="match status" value="1"/>
</dbReference>
<dbReference type="Gene3D" id="3.30.300.20">
    <property type="match status" value="1"/>
</dbReference>
<dbReference type="Gene3D" id="3.40.50.300">
    <property type="entry name" value="P-loop containing nucleotide triphosphate hydrolases"/>
    <property type="match status" value="1"/>
</dbReference>
<dbReference type="HAMAP" id="MF_00367">
    <property type="entry name" value="GTPase_Era"/>
    <property type="match status" value="1"/>
</dbReference>
<dbReference type="InterPro" id="IPR030388">
    <property type="entry name" value="G_ERA_dom"/>
</dbReference>
<dbReference type="InterPro" id="IPR006073">
    <property type="entry name" value="GTP-bd"/>
</dbReference>
<dbReference type="InterPro" id="IPR005662">
    <property type="entry name" value="GTPase_Era-like"/>
</dbReference>
<dbReference type="InterPro" id="IPR015946">
    <property type="entry name" value="KH_dom-like_a/b"/>
</dbReference>
<dbReference type="InterPro" id="IPR004044">
    <property type="entry name" value="KH_dom_type_2"/>
</dbReference>
<dbReference type="InterPro" id="IPR009019">
    <property type="entry name" value="KH_sf_prok-type"/>
</dbReference>
<dbReference type="InterPro" id="IPR027417">
    <property type="entry name" value="P-loop_NTPase"/>
</dbReference>
<dbReference type="InterPro" id="IPR005225">
    <property type="entry name" value="Small_GTP-bd"/>
</dbReference>
<dbReference type="NCBIfam" id="TIGR00436">
    <property type="entry name" value="era"/>
    <property type="match status" value="1"/>
</dbReference>
<dbReference type="NCBIfam" id="NF000908">
    <property type="entry name" value="PRK00089.1"/>
    <property type="match status" value="1"/>
</dbReference>
<dbReference type="NCBIfam" id="TIGR00231">
    <property type="entry name" value="small_GTP"/>
    <property type="match status" value="1"/>
</dbReference>
<dbReference type="PANTHER" id="PTHR42698">
    <property type="entry name" value="GTPASE ERA"/>
    <property type="match status" value="1"/>
</dbReference>
<dbReference type="PANTHER" id="PTHR42698:SF1">
    <property type="entry name" value="GTPASE ERA, MITOCHONDRIAL"/>
    <property type="match status" value="1"/>
</dbReference>
<dbReference type="Pfam" id="PF07650">
    <property type="entry name" value="KH_2"/>
    <property type="match status" value="1"/>
</dbReference>
<dbReference type="Pfam" id="PF01926">
    <property type="entry name" value="MMR_HSR1"/>
    <property type="match status" value="1"/>
</dbReference>
<dbReference type="PRINTS" id="PR00326">
    <property type="entry name" value="GTP1OBG"/>
</dbReference>
<dbReference type="SUPFAM" id="SSF52540">
    <property type="entry name" value="P-loop containing nucleoside triphosphate hydrolases"/>
    <property type="match status" value="1"/>
</dbReference>
<dbReference type="SUPFAM" id="SSF54814">
    <property type="entry name" value="Prokaryotic type KH domain (KH-domain type II)"/>
    <property type="match status" value="1"/>
</dbReference>
<dbReference type="PROSITE" id="PS51713">
    <property type="entry name" value="G_ERA"/>
    <property type="match status" value="1"/>
</dbReference>
<dbReference type="PROSITE" id="PS50823">
    <property type="entry name" value="KH_TYPE_2"/>
    <property type="match status" value="1"/>
</dbReference>
<reference key="1">
    <citation type="submission" date="2007-11" db="EMBL/GenBank/DDBJ databases">
        <title>Genome sequencing of phylogenetically and phenotypically diverse Coxiella burnetii isolates.</title>
        <authorList>
            <person name="Seshadri R."/>
            <person name="Samuel J.E."/>
        </authorList>
    </citation>
    <scope>NUCLEOTIDE SEQUENCE [LARGE SCALE GENOMIC DNA]</scope>
    <source>
        <strain>RSA 331 / Henzerling II</strain>
    </source>
</reference>
<organism>
    <name type="scientific">Coxiella burnetii (strain RSA 331 / Henzerling II)</name>
    <dbReference type="NCBI Taxonomy" id="360115"/>
    <lineage>
        <taxon>Bacteria</taxon>
        <taxon>Pseudomonadati</taxon>
        <taxon>Pseudomonadota</taxon>
        <taxon>Gammaproteobacteria</taxon>
        <taxon>Legionellales</taxon>
        <taxon>Coxiellaceae</taxon>
        <taxon>Coxiella</taxon>
    </lineage>
</organism>
<accession>A9N941</accession>
<feature type="chain" id="PRO_1000079681" description="GTPase Era">
    <location>
        <begin position="1"/>
        <end position="295"/>
    </location>
</feature>
<feature type="domain" description="Era-type G" evidence="2">
    <location>
        <begin position="5"/>
        <end position="172"/>
    </location>
</feature>
<feature type="domain" description="KH type-2" evidence="1">
    <location>
        <begin position="203"/>
        <end position="279"/>
    </location>
</feature>
<feature type="region of interest" description="G1" evidence="2">
    <location>
        <begin position="13"/>
        <end position="20"/>
    </location>
</feature>
<feature type="region of interest" description="G2" evidence="2">
    <location>
        <begin position="39"/>
        <end position="43"/>
    </location>
</feature>
<feature type="region of interest" description="G3" evidence="2">
    <location>
        <begin position="60"/>
        <end position="63"/>
    </location>
</feature>
<feature type="region of interest" description="G4" evidence="2">
    <location>
        <begin position="121"/>
        <end position="124"/>
    </location>
</feature>
<feature type="region of interest" description="G5" evidence="2">
    <location>
        <begin position="151"/>
        <end position="153"/>
    </location>
</feature>
<feature type="binding site" evidence="1">
    <location>
        <begin position="13"/>
        <end position="20"/>
    </location>
    <ligand>
        <name>GTP</name>
        <dbReference type="ChEBI" id="CHEBI:37565"/>
    </ligand>
</feature>
<feature type="binding site" evidence="1">
    <location>
        <begin position="60"/>
        <end position="64"/>
    </location>
    <ligand>
        <name>GTP</name>
        <dbReference type="ChEBI" id="CHEBI:37565"/>
    </ligand>
</feature>
<feature type="binding site" evidence="1">
    <location>
        <begin position="121"/>
        <end position="124"/>
    </location>
    <ligand>
        <name>GTP</name>
        <dbReference type="ChEBI" id="CHEBI:37565"/>
    </ligand>
</feature>
<protein>
    <recommendedName>
        <fullName evidence="1">GTPase Era</fullName>
    </recommendedName>
</protein>
<name>ERA_COXBR</name>
<gene>
    <name evidence="1" type="primary">era</name>
    <name type="ordered locus">COXBURSA331_A1685</name>
</gene>
<evidence type="ECO:0000255" key="1">
    <source>
        <dbReference type="HAMAP-Rule" id="MF_00367"/>
    </source>
</evidence>
<evidence type="ECO:0000255" key="2">
    <source>
        <dbReference type="PROSITE-ProRule" id="PRU01050"/>
    </source>
</evidence>
<comment type="function">
    <text evidence="1">An essential GTPase that binds both GDP and GTP, with rapid nucleotide exchange. Plays a role in 16S rRNA processing and 30S ribosomal subunit biogenesis and possibly also in cell cycle regulation and energy metabolism.</text>
</comment>
<comment type="subunit">
    <text evidence="1">Monomer.</text>
</comment>
<comment type="subcellular location">
    <subcellularLocation>
        <location>Cytoplasm</location>
    </subcellularLocation>
    <subcellularLocation>
        <location evidence="1">Cell inner membrane</location>
        <topology evidence="1">Peripheral membrane protein</topology>
    </subcellularLocation>
</comment>
<comment type="similarity">
    <text evidence="1 2">Belongs to the TRAFAC class TrmE-Era-EngA-EngB-Septin-like GTPase superfamily. Era GTPase family.</text>
</comment>
<proteinExistence type="inferred from homology"/>
<sequence>MKPTYCGYAAIIGRPNVGKSTLLNQLLEQKISITSRKPQTTRYQILGVKTFKDIQVIYVDTPGLHAGTERTINRYMNRTARGALRDVDAIVFVIEPHWESQDAWVLDNLKEIETPVFLVINKVDKIKNRAELLPLIEKVSSLYAFQKITPLSAKTGDQVGTLEQAVHQLMPESPFYFPPEQVTDRSDQFMASEIIREKLMRLLGQEIPYSLAVTLIEFRKEEKIIRISAVIWVEKKSQKGIVIGKGGERLKRVGTNARLDMEKWFGKRVFLQLWVKVKSGWADNERLLRELGFEE</sequence>
<keyword id="KW-0997">Cell inner membrane</keyword>
<keyword id="KW-1003">Cell membrane</keyword>
<keyword id="KW-0963">Cytoplasm</keyword>
<keyword id="KW-0342">GTP-binding</keyword>
<keyword id="KW-0472">Membrane</keyword>
<keyword id="KW-0547">Nucleotide-binding</keyword>
<keyword id="KW-0690">Ribosome biogenesis</keyword>
<keyword id="KW-0694">RNA-binding</keyword>
<keyword id="KW-0699">rRNA-binding</keyword>